<name>CO1A1_GLORB</name>
<proteinExistence type="evidence at protein level"/>
<feature type="chain" id="PRO_0000448472" description="Collagen alpha-1(I) chain">
    <location>
        <begin position="1"/>
        <end position="987"/>
    </location>
</feature>
<feature type="region of interest" description="Disordered" evidence="5">
    <location>
        <begin position="1"/>
        <end position="987"/>
    </location>
</feature>
<feature type="compositionally biased region" description="Pro residues" evidence="5">
    <location>
        <begin position="1"/>
        <end position="21"/>
    </location>
</feature>
<feature type="compositionally biased region" description="Low complexity" evidence="5">
    <location>
        <begin position="23"/>
        <end position="41"/>
    </location>
</feature>
<feature type="compositionally biased region" description="Basic and acidic residues" evidence="5">
    <location>
        <begin position="53"/>
        <end position="67"/>
    </location>
</feature>
<feature type="compositionally biased region" description="Low complexity" evidence="5">
    <location>
        <begin position="103"/>
        <end position="119"/>
    </location>
</feature>
<feature type="compositionally biased region" description="Low complexity" evidence="5">
    <location>
        <begin position="137"/>
        <end position="155"/>
    </location>
</feature>
<feature type="compositionally biased region" description="Pro residues" evidence="5">
    <location>
        <begin position="157"/>
        <end position="169"/>
    </location>
</feature>
<feature type="compositionally biased region" description="Low complexity" evidence="5">
    <location>
        <begin position="203"/>
        <end position="253"/>
    </location>
</feature>
<feature type="compositionally biased region" description="Gly residues" evidence="5">
    <location>
        <begin position="309"/>
        <end position="318"/>
    </location>
</feature>
<feature type="compositionally biased region" description="Low complexity" evidence="5">
    <location>
        <begin position="362"/>
        <end position="388"/>
    </location>
</feature>
<feature type="compositionally biased region" description="Low complexity" evidence="5">
    <location>
        <begin position="397"/>
        <end position="416"/>
    </location>
</feature>
<feature type="compositionally biased region" description="Low complexity" evidence="5">
    <location>
        <begin position="458"/>
        <end position="483"/>
    </location>
</feature>
<feature type="compositionally biased region" description="Low complexity" evidence="5">
    <location>
        <begin position="586"/>
        <end position="600"/>
    </location>
</feature>
<feature type="compositionally biased region" description="Low complexity" evidence="5">
    <location>
        <begin position="613"/>
        <end position="640"/>
    </location>
</feature>
<feature type="compositionally biased region" description="Pro residues" evidence="5">
    <location>
        <begin position="642"/>
        <end position="654"/>
    </location>
</feature>
<feature type="compositionally biased region" description="Low complexity" evidence="5">
    <location>
        <begin position="669"/>
        <end position="685"/>
    </location>
</feature>
<feature type="compositionally biased region" description="Low complexity" evidence="5">
    <location>
        <begin position="714"/>
        <end position="723"/>
    </location>
</feature>
<feature type="compositionally biased region" description="Low complexity" evidence="5">
    <location>
        <begin position="735"/>
        <end position="747"/>
    </location>
</feature>
<feature type="compositionally biased region" description="Pro residues" evidence="5">
    <location>
        <begin position="797"/>
        <end position="807"/>
    </location>
</feature>
<feature type="compositionally biased region" description="Low complexity" evidence="5">
    <location>
        <begin position="809"/>
        <end position="824"/>
    </location>
</feature>
<feature type="compositionally biased region" description="Pro residues" evidence="5">
    <location>
        <begin position="843"/>
        <end position="858"/>
    </location>
</feature>
<feature type="compositionally biased region" description="Low complexity" evidence="5">
    <location>
        <begin position="879"/>
        <end position="893"/>
    </location>
</feature>
<feature type="compositionally biased region" description="Basic and acidic residues" evidence="5">
    <location>
        <begin position="894"/>
        <end position="905"/>
    </location>
</feature>
<feature type="compositionally biased region" description="Low complexity" evidence="5">
    <location>
        <begin position="921"/>
        <end position="954"/>
    </location>
</feature>
<feature type="compositionally biased region" description="Pro residues" evidence="5">
    <location>
        <begin position="972"/>
        <end position="987"/>
    </location>
</feature>
<feature type="modified residue" description="4-hydroxyproline" evidence="3">
    <location>
        <position position="15"/>
    </location>
</feature>
<feature type="modified residue" description="4-hydroxyproline" evidence="3">
    <location>
        <position position="18"/>
    </location>
</feature>
<feature type="modified residue" description="4-hydroxyproline" evidence="3">
    <location>
        <position position="20"/>
    </location>
</feature>
<feature type="modified residue" description="4-hydroxyproline" evidence="3">
    <location>
        <position position="29"/>
    </location>
</feature>
<feature type="modified residue" description="4-hydroxyproline" evidence="3">
    <location>
        <position position="32"/>
    </location>
</feature>
<feature type="modified residue" description="4-hydroxyproline" evidence="3">
    <location>
        <position position="35"/>
    </location>
</feature>
<feature type="modified residue" description="4-hydroxyproline" evidence="3">
    <location>
        <position position="50"/>
    </location>
</feature>
<feature type="modified residue" description="4-hydroxyproline" evidence="3">
    <location>
        <position position="65"/>
    </location>
</feature>
<feature type="modified residue" description="4-hydroxyproline" evidence="3">
    <location>
        <position position="71"/>
    </location>
</feature>
<feature type="modified residue" description="4-hydroxyproline" evidence="3">
    <location>
        <position position="80"/>
    </location>
</feature>
<feature type="modified residue" description="4-hydroxyproline" evidence="3">
    <location>
        <position position="86"/>
    </location>
</feature>
<feature type="modified residue" description="5-hydroxylysine; alternate" evidence="1">
    <location>
        <position position="89"/>
    </location>
</feature>
<feature type="modified residue" description="Phosphoserine" evidence="2">
    <location>
        <position position="95"/>
    </location>
</feature>
<feature type="modified residue" description="4-hydroxyproline" evidence="3">
    <location>
        <position position="113"/>
    </location>
</feature>
<feature type="modified residue" description="4-hydroxyproline" evidence="3">
    <location>
        <position position="116"/>
    </location>
</feature>
<feature type="modified residue" description="4-hydroxyproline" evidence="3">
    <location>
        <position position="122"/>
    </location>
</feature>
<feature type="modified residue" description="4-hydroxyproline" evidence="3">
    <location>
        <position position="131"/>
    </location>
</feature>
<feature type="modified residue" description="4-hydroxyproline" evidence="3">
    <location>
        <position position="137"/>
    </location>
</feature>
<feature type="modified residue" description="4-hydroxyproline" evidence="3">
    <location>
        <position position="158"/>
    </location>
</feature>
<feature type="modified residue" description="4-hydroxyproline" evidence="3">
    <location>
        <position position="167"/>
    </location>
</feature>
<feature type="modified residue" description="4-hydroxyproline" evidence="3">
    <location>
        <position position="170"/>
    </location>
</feature>
<feature type="modified residue" description="4-hydroxyproline" evidence="3">
    <location>
        <position position="197"/>
    </location>
</feature>
<feature type="modified residue" description="4-hydroxyproline" evidence="3">
    <location>
        <position position="200"/>
    </location>
</feature>
<feature type="modified residue" description="4-hydroxyproline" evidence="3">
    <location>
        <position position="212"/>
    </location>
</feature>
<feature type="modified residue" description="4-hydroxyproline" evidence="3">
    <location>
        <position position="218"/>
    </location>
</feature>
<feature type="modified residue" description="4-hydroxyproline" evidence="3">
    <location>
        <position position="227"/>
    </location>
</feature>
<feature type="modified residue" description="4-hydroxyproline" evidence="3">
    <location>
        <position position="233"/>
    </location>
</feature>
<feature type="modified residue" description="4-hydroxyproline" evidence="3">
    <location>
        <position position="236"/>
    </location>
</feature>
<feature type="modified residue" description="4-hydroxyproline" evidence="3">
    <location>
        <position position="251"/>
    </location>
</feature>
<feature type="modified residue" description="5-hydroxylysine" evidence="3">
    <location>
        <position position="254"/>
    </location>
</feature>
<feature type="modified residue" description="4-hydroxyproline" evidence="3">
    <location>
        <position position="260"/>
    </location>
</feature>
<feature type="modified residue" description="4-hydroxyproline" evidence="3">
    <location>
        <position position="263"/>
    </location>
</feature>
<feature type="modified residue" description="4-hydroxyproline" evidence="3">
    <location>
        <position position="275"/>
    </location>
</feature>
<feature type="modified residue" description="4-hydroxyproline" evidence="3">
    <location>
        <position position="284"/>
    </location>
</feature>
<feature type="modified residue" description="4-hydroxyproline" evidence="3">
    <location>
        <position position="299"/>
    </location>
</feature>
<feature type="modified residue" description="4-hydroxyproline" evidence="3">
    <location>
        <position position="305"/>
    </location>
</feature>
<feature type="modified residue" description="4-hydroxyproline" evidence="3">
    <location>
        <position position="314"/>
    </location>
</feature>
<feature type="modified residue" description="4-hydroxyproline" evidence="3">
    <location>
        <position position="320"/>
    </location>
</feature>
<feature type="modified residue" description="5-hydroxylysine" evidence="3">
    <location>
        <position position="329"/>
    </location>
</feature>
<feature type="modified residue" description="4-hydroxyproline" evidence="3">
    <location>
        <position position="338"/>
    </location>
</feature>
<feature type="modified residue" description="4-hydroxyproline" evidence="3">
    <location>
        <position position="347"/>
    </location>
</feature>
<feature type="modified residue" description="4-hydroxyproline" evidence="3">
    <location>
        <position position="353"/>
    </location>
</feature>
<feature type="modified residue" description="4-hydroxyproline" evidence="3">
    <location>
        <position position="359"/>
    </location>
</feature>
<feature type="modified residue" description="4-hydroxyproline" evidence="3">
    <location>
        <position position="368"/>
    </location>
</feature>
<feature type="modified residue" description="4-hydroxyproline" evidence="3">
    <location>
        <position position="371"/>
    </location>
</feature>
<feature type="modified residue" description="4-hydroxyproline" evidence="3">
    <location>
        <position position="380"/>
    </location>
</feature>
<feature type="modified residue" description="4-hydroxyproline" evidence="3">
    <location>
        <position position="389"/>
    </location>
</feature>
<feature type="modified residue" description="4-hydroxyproline" evidence="3">
    <location>
        <position position="395"/>
    </location>
</feature>
<feature type="modified residue" description="4-hydroxyproline" evidence="3">
    <location>
        <position position="407"/>
    </location>
</feature>
<feature type="modified residue" description="4-hydroxyproline" evidence="3">
    <location>
        <position position="416"/>
    </location>
</feature>
<feature type="modified residue" description="4-hydroxyproline" evidence="3">
    <location>
        <position position="425"/>
    </location>
</feature>
<feature type="modified residue" description="4-hydroxyproline" evidence="3">
    <location>
        <position position="428"/>
    </location>
</feature>
<feature type="modified residue" description="4-hydroxyproline" evidence="3">
    <location>
        <position position="446"/>
    </location>
</feature>
<feature type="modified residue" description="4-hydroxyproline" evidence="3">
    <location>
        <position position="468"/>
    </location>
</feature>
<feature type="modified residue" description="4-hydroxyproline" evidence="3">
    <location>
        <position position="474"/>
    </location>
</feature>
<feature type="modified residue" description="4-hydroxyproline" evidence="3">
    <location>
        <position position="480"/>
    </location>
</feature>
<feature type="modified residue" description="4-hydroxyproline" evidence="3">
    <location>
        <position position="486"/>
    </location>
</feature>
<feature type="modified residue" description="4-hydroxyproline" evidence="3">
    <location>
        <position position="492"/>
    </location>
</feature>
<feature type="modified residue" description="4-hydroxyproline" evidence="3">
    <location>
        <position position="504"/>
    </location>
</feature>
<feature type="modified residue" description="4-hydroxyproline" evidence="3">
    <location>
        <position position="513"/>
    </location>
</feature>
<feature type="modified residue" description="4-hydroxyproline" evidence="3">
    <location>
        <position position="526"/>
    </location>
</feature>
<feature type="modified residue" description="4-hydroxyproline" evidence="3">
    <location>
        <position position="532"/>
    </location>
</feature>
<feature type="modified residue" description="4-hydroxyproline" evidence="3">
    <location>
        <position position="541"/>
    </location>
</feature>
<feature type="modified residue" description="5-hydroxylysine" evidence="3">
    <location>
        <position position="553"/>
    </location>
</feature>
<feature type="modified residue" description="4-hydroxyproline" evidence="3">
    <location>
        <position position="559"/>
    </location>
</feature>
<feature type="modified residue" description="4-hydroxyproline" evidence="3">
    <location>
        <position position="574"/>
    </location>
</feature>
<feature type="modified residue" description="4-hydroxyproline" evidence="3">
    <location>
        <position position="580"/>
    </location>
</feature>
<feature type="modified residue" description="Phosphoserine" evidence="2">
    <location>
        <position position="589"/>
    </location>
</feature>
<feature type="modified residue" description="4-hydroxyproline" evidence="3">
    <location>
        <position position="601"/>
    </location>
</feature>
<feature type="modified residue" description="4-hydroxyproline" evidence="3">
    <location>
        <position position="607"/>
    </location>
</feature>
<feature type="modified residue" description="4-hydroxyproline" evidence="3">
    <location>
        <position position="610"/>
    </location>
</feature>
<feature type="modified residue" description="4-hydroxyproline" evidence="3">
    <location>
        <position position="619"/>
    </location>
</feature>
<feature type="modified residue" description="4-hydroxyproline" evidence="3">
    <location>
        <position position="625"/>
    </location>
</feature>
<feature type="modified residue" description="4-hydroxyproline" evidence="3">
    <location>
        <position position="643"/>
    </location>
</feature>
<feature type="modified residue" description="4-hydroxyproline" evidence="3">
    <location>
        <position position="652"/>
    </location>
</feature>
<feature type="modified residue" description="4-hydroxyproline" evidence="3">
    <location>
        <position position="661"/>
    </location>
</feature>
<feature type="modified residue" description="5-hydroxylysine" evidence="3">
    <location>
        <position position="664"/>
    </location>
</feature>
<feature type="modified residue" description="4-hydroxyproline" evidence="3">
    <location>
        <position position="673"/>
    </location>
</feature>
<feature type="modified residue" description="4-hydroxyproline" evidence="3">
    <location>
        <position position="679"/>
    </location>
</feature>
<feature type="modified residue" description="3-hydroxyproline" evidence="4">
    <location>
        <position position="687"/>
    </location>
</feature>
<feature type="modified residue" description="4-hydroxyproline" evidence="4">
    <location>
        <position position="688"/>
    </location>
</feature>
<feature type="modified residue" description="4-hydroxyproline" evidence="4">
    <location>
        <position position="697"/>
    </location>
</feature>
<feature type="modified residue" description="4-hydroxyproline" evidence="4">
    <location>
        <position position="700"/>
    </location>
</feature>
<feature type="modified residue" description="4-hydroxyproline" evidence="3">
    <location>
        <position position="721"/>
    </location>
</feature>
<feature type="modified residue" description="4-hydroxyproline" evidence="3">
    <location>
        <position position="730"/>
    </location>
</feature>
<feature type="modified residue" description="4-hydroxyproline" evidence="3">
    <location>
        <position position="738"/>
    </location>
</feature>
<feature type="modified residue" description="4-hydroxyproline" evidence="3">
    <location>
        <position position="747"/>
    </location>
</feature>
<feature type="modified residue" description="4-hydroxyproline" evidence="3">
    <location>
        <position position="765"/>
    </location>
</feature>
<feature type="modified residue" description="4-hydroxyproline" evidence="3">
    <location>
        <position position="774"/>
    </location>
</feature>
<feature type="modified residue" description="4-hydroxyproline" evidence="3">
    <location>
        <position position="777"/>
    </location>
</feature>
<feature type="modified residue" description="4-hydroxyproline" evidence="3">
    <location>
        <position position="783"/>
    </location>
</feature>
<feature type="modified residue" description="4-hydroxyproline" evidence="3">
    <location>
        <position position="798"/>
    </location>
</feature>
<feature type="modified residue" description="4-hydroxyproline" evidence="3">
    <location>
        <position position="804"/>
    </location>
</feature>
<feature type="modified residue" description="4-hydroxyproline" evidence="3">
    <location>
        <position position="810"/>
    </location>
</feature>
<feature type="modified residue" description="4-hydroxyproline" evidence="3">
    <location>
        <position position="819"/>
    </location>
</feature>
<feature type="modified residue" description="4-hydroxyproline" evidence="3">
    <location>
        <position position="825"/>
    </location>
</feature>
<feature type="modified residue" description="5-hydroxylysine" evidence="3">
    <location>
        <position position="834"/>
    </location>
</feature>
<feature type="modified residue" description="4-hydroxyproline" evidence="3">
    <location>
        <position position="846"/>
    </location>
</feature>
<feature type="modified residue" description="4-hydroxyproline" evidence="3">
    <location>
        <position position="849"/>
    </location>
</feature>
<feature type="modified residue" description="4-hydroxyproline" evidence="3">
    <location>
        <position position="852"/>
    </location>
</feature>
<feature type="modified residue" description="5-hydroxylysine" evidence="3">
    <location>
        <position position="897"/>
    </location>
</feature>
<feature type="modified residue" description="4-hydroxyproline" evidence="3">
    <location>
        <position position="918"/>
    </location>
</feature>
<feature type="modified residue" description="4-hydroxyproline" evidence="3">
    <location>
        <position position="921"/>
    </location>
</feature>
<feature type="modified residue" description="4-hydroxyproline" evidence="3">
    <location>
        <position position="939"/>
    </location>
</feature>
<feature type="modified residue" description="4-hydroxyproline" evidence="4">
    <location>
        <position position="954"/>
    </location>
</feature>
<feature type="modified residue" description="3-hydroxyproline" evidence="4">
    <location>
        <position position="959"/>
    </location>
</feature>
<feature type="modified residue" description="4-hydroxyproline" evidence="4">
    <location>
        <position position="960"/>
    </location>
</feature>
<feature type="modified residue" description="3-hydroxyproline" evidence="4">
    <location>
        <position position="974"/>
    </location>
</feature>
<feature type="modified residue" description="4-hydroxyproline" evidence="4">
    <location>
        <position position="975"/>
    </location>
</feature>
<feature type="modified residue" description="3-hydroxyproline" evidence="4">
    <location>
        <position position="977"/>
    </location>
</feature>
<feature type="modified residue" description="4-hydroxyproline" evidence="4">
    <location>
        <position position="978"/>
    </location>
</feature>
<feature type="modified residue" description="3-hydroxyproline" evidence="4">
    <location>
        <position position="980"/>
    </location>
</feature>
<feature type="modified residue" description="4-hydroxyproline" evidence="4">
    <location>
        <position position="981"/>
    </location>
</feature>
<feature type="modified residue" description="4-hydroxyproline" evidence="4">
    <location>
        <position position="984"/>
    </location>
</feature>
<feature type="modified residue" description="4-hydroxyproline" evidence="4">
    <location>
        <position position="987"/>
    </location>
</feature>
<feature type="glycosylation site" description="O-linked (Gal...) hydroxylysine; alternate" evidence="1">
    <location>
        <position position="89"/>
    </location>
</feature>
<feature type="unsure residue" description="L or I" evidence="6">
    <location>
        <position position="14"/>
    </location>
</feature>
<feature type="unsure residue" description="L or I" evidence="6">
    <location>
        <position position="79"/>
    </location>
</feature>
<feature type="unsure residue" description="L or I" evidence="6">
    <location>
        <position position="85"/>
    </location>
</feature>
<feature type="unsure residue" description="L or I" evidence="6">
    <location>
        <position position="97"/>
    </location>
</feature>
<feature type="unsure residue" description="L or I" evidence="6">
    <location>
        <position position="130"/>
    </location>
</feature>
<feature type="unsure residue" description="I or L" evidence="6">
    <location>
        <position position="229"/>
    </location>
</feature>
<feature type="unsure residue" description="I or L" evidence="6">
    <location>
        <position position="280"/>
    </location>
</feature>
<feature type="unsure residue" description="L or I" evidence="6">
    <location>
        <position position="304"/>
    </location>
</feature>
<feature type="unsure residue" description="L or I" evidence="6">
    <location>
        <position position="358"/>
    </location>
</feature>
<feature type="unsure residue" description="L or I" evidence="6">
    <location>
        <position position="364"/>
    </location>
</feature>
<feature type="unsure residue" description="L or I" evidence="6">
    <location>
        <position position="467"/>
    </location>
</feature>
<feature type="unsure residue" description="L or I" evidence="6">
    <location>
        <position position="489"/>
    </location>
</feature>
<feature type="unsure residue" description="L or I" evidence="6">
    <location>
        <position position="528"/>
    </location>
</feature>
<feature type="unsure residue" description="L or I" evidence="6">
    <location>
        <position position="540"/>
    </location>
</feature>
<feature type="unsure residue" description="L or I" evidence="6">
    <location>
        <position position="567"/>
    </location>
</feature>
<feature type="unsure residue" description="I or L" evidence="6">
    <location>
        <position position="571"/>
    </location>
</feature>
<feature type="unsure residue" description="I or L" evidence="6">
    <location>
        <position position="655"/>
    </location>
</feature>
<feature type="unsure residue" description="I or L" evidence="6">
    <location>
        <position position="755"/>
    </location>
</feature>
<feature type="unsure residue" description="L or I" evidence="6">
    <location>
        <position position="764"/>
    </location>
</feature>
<feature type="unsure residue" description="L or I" evidence="6">
    <location>
        <position position="776"/>
    </location>
</feature>
<feature type="unsure residue" description="L or I" evidence="6">
    <location>
        <position position="806"/>
    </location>
</feature>
<feature type="unsure residue" description="L or I" evidence="6">
    <location>
        <position position="911"/>
    </location>
</feature>
<feature type="unsure residue" description="L or I" evidence="6">
    <location>
        <position position="950"/>
    </location>
</feature>
<feature type="unsure residue" description="L or I" evidence="6">
    <location>
        <position position="953"/>
    </location>
</feature>
<feature type="unsure residue" description="I or L" evidence="6">
    <location>
        <position position="957"/>
    </location>
</feature>
<feature type="non-consecutive residues" evidence="7">
    <location>
        <begin position="19"/>
        <end position="20"/>
    </location>
</feature>
<feature type="non-consecutive residues" evidence="7">
    <location>
        <begin position="461"/>
        <end position="462"/>
    </location>
</feature>
<feature type="non-consecutive residues" evidence="7">
    <location>
        <begin position="521"/>
        <end position="522"/>
    </location>
</feature>
<feature type="non-consecutive residues" evidence="7">
    <location>
        <begin position="732"/>
        <end position="733"/>
    </location>
</feature>
<feature type="non-consecutive residues" evidence="7">
    <location>
        <begin position="906"/>
        <end position="907"/>
    </location>
</feature>
<feature type="non-terminal residue" evidence="7">
    <location>
        <position position="1"/>
    </location>
</feature>
<feature type="non-terminal residue" evidence="7">
    <location>
        <position position="987"/>
    </location>
</feature>
<organism evidence="7">
    <name type="scientific">Glossotherium robustum</name>
    <name type="common">Ground sloth</name>
    <name type="synonym">Mylodon robustus</name>
    <dbReference type="NCBI Taxonomy" id="2591764"/>
    <lineage>
        <taxon>Eukaryota</taxon>
        <taxon>Metazoa</taxon>
        <taxon>Chordata</taxon>
        <taxon>Craniata</taxon>
        <taxon>Vertebrata</taxon>
        <taxon>Euteleostomi</taxon>
        <taxon>Mammalia</taxon>
        <taxon>Eutheria</taxon>
        <taxon>Xenarthra</taxon>
        <taxon>Pilosa</taxon>
        <taxon>Folivora</taxon>
        <taxon>Mylodontidae</taxon>
        <taxon>Glossotherium</taxon>
    </lineage>
</organism>
<protein>
    <recommendedName>
        <fullName evidence="7">Collagen alpha-1(I) chain</fullName>
    </recommendedName>
    <alternativeName>
        <fullName evidence="1">Alpha-1 type I collagen</fullName>
    </alternativeName>
</protein>
<evidence type="ECO:0000250" key="1">
    <source>
        <dbReference type="UniProtKB" id="P02452"/>
    </source>
</evidence>
<evidence type="ECO:0000250" key="2">
    <source>
        <dbReference type="UniProtKB" id="P02454"/>
    </source>
</evidence>
<evidence type="ECO:0000250" key="3">
    <source>
        <dbReference type="UniProtKB" id="P02457"/>
    </source>
</evidence>
<evidence type="ECO:0000250" key="4">
    <source>
        <dbReference type="UniProtKB" id="P11087"/>
    </source>
</evidence>
<evidence type="ECO:0000256" key="5">
    <source>
        <dbReference type="SAM" id="MobiDB-lite"/>
    </source>
</evidence>
<evidence type="ECO:0000269" key="6">
    <source>
    </source>
</evidence>
<evidence type="ECO:0000303" key="7">
    <source>
    </source>
</evidence>
<evidence type="ECO:0000305" key="8"/>
<accession>C0HLI3</accession>
<dbReference type="GO" id="GO:0031012">
    <property type="term" value="C:extracellular matrix"/>
    <property type="evidence" value="ECO:0007669"/>
    <property type="project" value="TreeGrafter"/>
</dbReference>
<dbReference type="GO" id="GO:0005615">
    <property type="term" value="C:extracellular space"/>
    <property type="evidence" value="ECO:0007669"/>
    <property type="project" value="TreeGrafter"/>
</dbReference>
<dbReference type="InterPro" id="IPR008160">
    <property type="entry name" value="Collagen"/>
</dbReference>
<dbReference type="InterPro" id="IPR050149">
    <property type="entry name" value="Collagen_superfamily"/>
</dbReference>
<dbReference type="PANTHER" id="PTHR24023">
    <property type="entry name" value="COLLAGEN ALPHA"/>
    <property type="match status" value="1"/>
</dbReference>
<dbReference type="PANTHER" id="PTHR24023:SF1082">
    <property type="entry name" value="COLLAGEN TRIPLE HELIX REPEAT"/>
    <property type="match status" value="1"/>
</dbReference>
<dbReference type="Pfam" id="PF01391">
    <property type="entry name" value="Collagen"/>
    <property type="match status" value="9"/>
</dbReference>
<reference evidence="8" key="1">
    <citation type="journal article" date="2019" name="Nat. Ecol. Evol.">
        <title>Palaeoproteomics resolves sloth relationships.</title>
        <authorList>
            <person name="Presslee S."/>
            <person name="Slater G.J."/>
            <person name="Pujos F."/>
            <person name="Forasiepi A.M."/>
            <person name="Fischer R."/>
            <person name="Molloy K."/>
            <person name="Mackie M."/>
            <person name="Olsen J.V."/>
            <person name="Kramarz A."/>
            <person name="Taglioretti M."/>
            <person name="Scaglia F."/>
            <person name="Lezcano M."/>
            <person name="Lanata J.L."/>
            <person name="Southon J."/>
            <person name="Feranec R."/>
            <person name="Bloch J."/>
            <person name="Hajduk A."/>
            <person name="Martin F.M."/>
            <person name="Salas Gismondi R."/>
            <person name="Reguero M."/>
            <person name="de Muizon C."/>
            <person name="Greenwood A."/>
            <person name="Chait B.T."/>
            <person name="Penkman K."/>
            <person name="Collins M."/>
            <person name="MacPhee R.D.E."/>
        </authorList>
    </citation>
    <scope>PROTEIN SEQUENCE</scope>
    <scope>TISSUE SPECIFICITY</scope>
    <scope>IDENTIFICATION BY MASS SPECTROMETRY</scope>
    <source>
        <tissue evidence="7">Bone</tissue>
    </source>
</reference>
<keyword id="KW-0903">Direct protein sequencing</keyword>
<keyword id="KW-0952">Extinct organism protein</keyword>
<keyword id="KW-0272">Extracellular matrix</keyword>
<keyword id="KW-0325">Glycoprotein</keyword>
<keyword id="KW-0379">Hydroxylation</keyword>
<keyword id="KW-0597">Phosphoprotein</keyword>
<keyword id="KW-0964">Secreted</keyword>
<comment type="function">
    <text evidence="8">Type I collagen is a member of group I collagen (fibrillar forming collagen).</text>
</comment>
<comment type="subunit">
    <text evidence="8">Trimers of one alpha 2(I) and two alpha 1(I) chains.</text>
</comment>
<comment type="subcellular location">
    <subcellularLocation>
        <location>Secreted</location>
    </subcellularLocation>
    <subcellularLocation>
        <location>Secreted</location>
        <location>Extracellular space</location>
    </subcellularLocation>
    <subcellularLocation>
        <location evidence="8">Secreted</location>
        <location evidence="8">Extracellular space</location>
        <location evidence="8">Extracellular matrix</location>
    </subcellularLocation>
</comment>
<comment type="tissue specificity">
    <text evidence="6">Expressed in bones.</text>
</comment>
<comment type="PTM">
    <text evidence="1">Contains mostly 4-hydroxyproline. Proline residues at the third position of the tripeptide repeating unit (G-X-Y) are hydroxylated in some or all of the chains.</text>
</comment>
<comment type="PTM">
    <text evidence="4">Contains 3-hydroxyproline at a few sites. This modification occurs on the first proline residue in the sequence motif Gly-Pro-Hyp, where Hyp is 4-hydroxyproline.</text>
</comment>
<comment type="PTM">
    <text evidence="1">Lysine residues at the third position of the tripeptide repeating unit (G-X-Y) are 5-hydroxylated in some or all of the chains.</text>
</comment>
<comment type="PTM">
    <text evidence="1">O-glycosylated on hydroxylated lysine residues. The O-linked glycan consists of a Glc-Gal disaccharide.</text>
</comment>
<comment type="miscellaneous">
    <text evidence="6">These protein fragments were extracted from an ancient skull bone collected in Buenos Aires in Argentina.</text>
</comment>
<comment type="similarity">
    <text evidence="8">Belongs to the fibrillar collagen family.</text>
</comment>
<sequence>SVPGPMGPSGPRGLPGPPGPGPQGFQGPPGEPGEPGSSGPMGPRGPPGPPGKNGDDGEAGKPGRPGERGPPGPQGARGLPGTAGLPGMKGHRGFSGLDGAKGDAGPAGPKGEPGSPGENGAPGQMGPRGLPGERGRPGASGPAGARGNDGAAGAAGPPGPTGPAGPPGFPGAVGAKGEAGPQGARGSEGPQGVRGEPGPPGPAGAAGPAGNPGADGQPGAKGANGAPGIAGAPGFPGARGPSGPQGPSGAPGPKGNSGEPGAPGNKGDTGAKGEPGPTGIQGPPGPAGEEGKRGARGEPGPTGLPGPPGERGGPGSRGFPGADGVAGPKGPAGERGSPGPAGPKGSPGEAGRPGEAGLPGAKGLTGSPGSPGPDGKTGPPGPAGQDGRPGPPGPPGARGQAGVMGFPGPKGAAGEPGKAGERGVPGPPGAVGPAGKDGEAGAQGPPGPAGPAGERGEQGPAPGFQGLPGPAGPPGEAGKPGEQGVPGDLGAPGPSGARGERGFPGERGVQGPPGPAGPRGSSQGAPGLQGMPGERGAAGLPGPKGDRGDAGPKGADGAPGKDGVRGLTGPIGPPGPAGAPGDKGESGPSGPAGPTGARGAPGDRGEPGPPGPAGFAGPPGADGQPGAKGEPGDAGAKGDAGPPGPAGPTGPPGPIGNVGAPGPKGARGSAGPPGATGFPGAAGRVGPPGPSGNAGPPGPPGPVGKEGGKGPRGETGPAGRPGEVGPPGPPGPGEKGSPGADGPAGAPGTPGPQGISGQRGVVGLPGQRGERGFPGLPGPSGEPGKQGPSGSSGERGPPGPMGPPGLAGPPGESGREGSPGAEGSPGRDGSPGPKGDRGESGPAGPPGAPGAPGAPGPVGPAGKSGDRGETGPAGPAGPAGPAGARGPAGPQGPRGDKGETGEQGDRGFSGLQGPAGPPGSPGEQGPSGASGPAGPRGPPGSAGSPGKDGLNGLPGPIGPPGPRGRTGDAGPVGPPGPPGPPGPPGPP</sequence>